<protein>
    <recommendedName>
        <fullName evidence="1">Biosynthetic arginine decarboxylase</fullName>
        <shortName evidence="1">ADC</shortName>
        <ecNumber evidence="1">4.1.1.19</ecNumber>
    </recommendedName>
</protein>
<evidence type="ECO:0000255" key="1">
    <source>
        <dbReference type="HAMAP-Rule" id="MF_01417"/>
    </source>
</evidence>
<name>SPEA_PHOLL</name>
<sequence length="634" mass="71155">MNDNIARKMQQTYNIAYWGGSYYYVNDLGNVSVCPNPDLPGAKIDLAELVKRVQQEQKHLRLPALFCFPQILQHRLRSINAAFKRARESYGYKGDYFLVYPIKVNQQRRVIESLASSGEPLGLEAGSKAELMAVLAHAGMTRTVIVCNGYKDREYIRLALIGEKLGHKVYLVIEKMSEIAQVLEEAERLNVIPRLGVRARLASQGSGKWQASGGEKSKFGLAATQVLQLVETLRAVDRLDSLQLLHFHLGSQLANIRDIATGVRESARFYVELHKLGVNIQCFDVGGGLGVDYEGTRSQSDCSVNYGLNEYANNVIWGIGDACDEHGLPHPTVITESGRALTAHHTVLVSNVIGVERNEFTQTTPPAEDASRPLTSLWETWQEMHSEGNRRSLRESLHDGQLDLHDVHTQYAHGMLDLTERAWAEELYLNICRRIQQDLDPSNRAHRPIIDELQERMADKFYVNFSLFQSLPDAWGIDQLFPVLPIEGLDKPLDRRAVLLDITCDSDGIVDHYVDGDGVAATMPMPAYDPDCPPMIGFFMVGAYQEILGNMHNLFGDTAAIDVYVFDNGEVTYNQSEEGDSVADMLQYVKLDPNVLMARFRDQVKGADLDTGLQEQFLLEFESGLYGYTYLEDE</sequence>
<reference key="1">
    <citation type="journal article" date="2003" name="Nat. Biotechnol.">
        <title>The genome sequence of the entomopathogenic bacterium Photorhabdus luminescens.</title>
        <authorList>
            <person name="Duchaud E."/>
            <person name="Rusniok C."/>
            <person name="Frangeul L."/>
            <person name="Buchrieser C."/>
            <person name="Givaudan A."/>
            <person name="Taourit S."/>
            <person name="Bocs S."/>
            <person name="Boursaux-Eude C."/>
            <person name="Chandler M."/>
            <person name="Charles J.-F."/>
            <person name="Dassa E."/>
            <person name="Derose R."/>
            <person name="Derzelle S."/>
            <person name="Freyssinet G."/>
            <person name="Gaudriault S."/>
            <person name="Medigue C."/>
            <person name="Lanois A."/>
            <person name="Powell K."/>
            <person name="Siguier P."/>
            <person name="Vincent R."/>
            <person name="Wingate V."/>
            <person name="Zouine M."/>
            <person name="Glaser P."/>
            <person name="Boemare N."/>
            <person name="Danchin A."/>
            <person name="Kunst F."/>
        </authorList>
    </citation>
    <scope>NUCLEOTIDE SEQUENCE [LARGE SCALE GENOMIC DNA]</scope>
    <source>
        <strain>DSM 15139 / CIP 105565 / TT01</strain>
    </source>
</reference>
<comment type="function">
    <text evidence="1">Catalyzes the biosynthesis of agmatine from arginine.</text>
</comment>
<comment type="catalytic activity">
    <reaction evidence="1">
        <text>L-arginine + H(+) = agmatine + CO2</text>
        <dbReference type="Rhea" id="RHEA:17641"/>
        <dbReference type="ChEBI" id="CHEBI:15378"/>
        <dbReference type="ChEBI" id="CHEBI:16526"/>
        <dbReference type="ChEBI" id="CHEBI:32682"/>
        <dbReference type="ChEBI" id="CHEBI:58145"/>
        <dbReference type="EC" id="4.1.1.19"/>
    </reaction>
</comment>
<comment type="cofactor">
    <cofactor evidence="1">
        <name>Mg(2+)</name>
        <dbReference type="ChEBI" id="CHEBI:18420"/>
    </cofactor>
</comment>
<comment type="cofactor">
    <cofactor evidence="1">
        <name>pyridoxal 5'-phosphate</name>
        <dbReference type="ChEBI" id="CHEBI:597326"/>
    </cofactor>
</comment>
<comment type="pathway">
    <text evidence="1">Amine and polyamine biosynthesis; agmatine biosynthesis; agmatine from L-arginine: step 1/1.</text>
</comment>
<comment type="similarity">
    <text evidence="1">Belongs to the Orn/Lys/Arg decarboxylase class-II family. SpeA subfamily.</text>
</comment>
<dbReference type="EC" id="4.1.1.19" evidence="1"/>
<dbReference type="EMBL" id="BX571871">
    <property type="protein sequence ID" value="CAE16054.1"/>
    <property type="molecule type" value="Genomic_DNA"/>
</dbReference>
<dbReference type="RefSeq" id="WP_011147844.1">
    <property type="nucleotide sequence ID" value="NC_005126.1"/>
</dbReference>
<dbReference type="SMR" id="Q7N121"/>
<dbReference type="STRING" id="243265.plu3681"/>
<dbReference type="GeneID" id="48849924"/>
<dbReference type="KEGG" id="plu:plu3681"/>
<dbReference type="eggNOG" id="COG1166">
    <property type="taxonomic scope" value="Bacteria"/>
</dbReference>
<dbReference type="HOGENOM" id="CLU_027243_1_0_6"/>
<dbReference type="OrthoDB" id="9802658at2"/>
<dbReference type="UniPathway" id="UPA00186">
    <property type="reaction ID" value="UER00284"/>
</dbReference>
<dbReference type="Proteomes" id="UP000002514">
    <property type="component" value="Chromosome"/>
</dbReference>
<dbReference type="GO" id="GO:0008792">
    <property type="term" value="F:arginine decarboxylase activity"/>
    <property type="evidence" value="ECO:0007669"/>
    <property type="project" value="UniProtKB-UniRule"/>
</dbReference>
<dbReference type="GO" id="GO:0046872">
    <property type="term" value="F:metal ion binding"/>
    <property type="evidence" value="ECO:0007669"/>
    <property type="project" value="UniProtKB-KW"/>
</dbReference>
<dbReference type="GO" id="GO:0006527">
    <property type="term" value="P:arginine catabolic process"/>
    <property type="evidence" value="ECO:0007669"/>
    <property type="project" value="InterPro"/>
</dbReference>
<dbReference type="GO" id="GO:0033388">
    <property type="term" value="P:putrescine biosynthetic process from arginine"/>
    <property type="evidence" value="ECO:0007669"/>
    <property type="project" value="TreeGrafter"/>
</dbReference>
<dbReference type="GO" id="GO:0008295">
    <property type="term" value="P:spermidine biosynthetic process"/>
    <property type="evidence" value="ECO:0007669"/>
    <property type="project" value="UniProtKB-UniRule"/>
</dbReference>
<dbReference type="CDD" id="cd06830">
    <property type="entry name" value="PLPDE_III_ADC"/>
    <property type="match status" value="1"/>
</dbReference>
<dbReference type="FunFam" id="1.10.287.3440:FF:000001">
    <property type="entry name" value="Biosynthetic arginine decarboxylase"/>
    <property type="match status" value="1"/>
</dbReference>
<dbReference type="FunFam" id="1.20.58.930:FF:000001">
    <property type="entry name" value="Biosynthetic arginine decarboxylase"/>
    <property type="match status" value="1"/>
</dbReference>
<dbReference type="FunFam" id="2.40.37.10:FF:000001">
    <property type="entry name" value="Biosynthetic arginine decarboxylase"/>
    <property type="match status" value="1"/>
</dbReference>
<dbReference type="FunFam" id="3.20.20.10:FF:000001">
    <property type="entry name" value="Biosynthetic arginine decarboxylase"/>
    <property type="match status" value="1"/>
</dbReference>
<dbReference type="Gene3D" id="1.10.287.3440">
    <property type="match status" value="1"/>
</dbReference>
<dbReference type="Gene3D" id="1.20.58.930">
    <property type="match status" value="1"/>
</dbReference>
<dbReference type="Gene3D" id="3.20.20.10">
    <property type="entry name" value="Alanine racemase"/>
    <property type="match status" value="1"/>
</dbReference>
<dbReference type="Gene3D" id="2.40.37.10">
    <property type="entry name" value="Lyase, Ornithine Decarboxylase, Chain A, domain 1"/>
    <property type="match status" value="1"/>
</dbReference>
<dbReference type="HAMAP" id="MF_01417">
    <property type="entry name" value="SpeA"/>
    <property type="match status" value="1"/>
</dbReference>
<dbReference type="InterPro" id="IPR009006">
    <property type="entry name" value="Ala_racemase/Decarboxylase_C"/>
</dbReference>
<dbReference type="InterPro" id="IPR040634">
    <property type="entry name" value="Arg_decarb_HB"/>
</dbReference>
<dbReference type="InterPro" id="IPR041128">
    <property type="entry name" value="Arg_decarbox_C"/>
</dbReference>
<dbReference type="InterPro" id="IPR002985">
    <property type="entry name" value="Arg_decrbxlase"/>
</dbReference>
<dbReference type="InterPro" id="IPR022657">
    <property type="entry name" value="De-COase2_CS"/>
</dbReference>
<dbReference type="InterPro" id="IPR022644">
    <property type="entry name" value="De-COase2_N"/>
</dbReference>
<dbReference type="InterPro" id="IPR022653">
    <property type="entry name" value="De-COase2_pyr-phos_BS"/>
</dbReference>
<dbReference type="InterPro" id="IPR000183">
    <property type="entry name" value="Orn/DAP/Arg_de-COase"/>
</dbReference>
<dbReference type="InterPro" id="IPR029066">
    <property type="entry name" value="PLP-binding_barrel"/>
</dbReference>
<dbReference type="NCBIfam" id="NF003763">
    <property type="entry name" value="PRK05354.1"/>
    <property type="match status" value="1"/>
</dbReference>
<dbReference type="NCBIfam" id="TIGR01273">
    <property type="entry name" value="speA"/>
    <property type="match status" value="1"/>
</dbReference>
<dbReference type="PANTHER" id="PTHR43295">
    <property type="entry name" value="ARGININE DECARBOXYLASE"/>
    <property type="match status" value="1"/>
</dbReference>
<dbReference type="PANTHER" id="PTHR43295:SF9">
    <property type="entry name" value="BIOSYNTHETIC ARGININE DECARBOXYLASE"/>
    <property type="match status" value="1"/>
</dbReference>
<dbReference type="Pfam" id="PF17810">
    <property type="entry name" value="Arg_decarb_HB"/>
    <property type="match status" value="1"/>
</dbReference>
<dbReference type="Pfam" id="PF17944">
    <property type="entry name" value="Arg_decarbox_C"/>
    <property type="match status" value="1"/>
</dbReference>
<dbReference type="Pfam" id="PF02784">
    <property type="entry name" value="Orn_Arg_deC_N"/>
    <property type="match status" value="1"/>
</dbReference>
<dbReference type="PIRSF" id="PIRSF001336">
    <property type="entry name" value="Arg_decrbxlase"/>
    <property type="match status" value="1"/>
</dbReference>
<dbReference type="PRINTS" id="PR01180">
    <property type="entry name" value="ARGDCRBXLASE"/>
</dbReference>
<dbReference type="PRINTS" id="PR01179">
    <property type="entry name" value="ODADCRBXLASE"/>
</dbReference>
<dbReference type="SUPFAM" id="SSF50621">
    <property type="entry name" value="Alanine racemase C-terminal domain-like"/>
    <property type="match status" value="1"/>
</dbReference>
<dbReference type="SUPFAM" id="SSF51419">
    <property type="entry name" value="PLP-binding barrel"/>
    <property type="match status" value="1"/>
</dbReference>
<dbReference type="PROSITE" id="PS00878">
    <property type="entry name" value="ODR_DC_2_1"/>
    <property type="match status" value="1"/>
</dbReference>
<dbReference type="PROSITE" id="PS00879">
    <property type="entry name" value="ODR_DC_2_2"/>
    <property type="match status" value="1"/>
</dbReference>
<feature type="chain" id="PRO_0000149967" description="Biosynthetic arginine decarboxylase">
    <location>
        <begin position="1"/>
        <end position="634"/>
    </location>
</feature>
<feature type="binding site" evidence="1">
    <location>
        <begin position="283"/>
        <end position="293"/>
    </location>
    <ligand>
        <name>substrate</name>
    </ligand>
</feature>
<feature type="modified residue" description="N6-(pyridoxal phosphate)lysine" evidence="1">
    <location>
        <position position="103"/>
    </location>
</feature>
<keyword id="KW-0210">Decarboxylase</keyword>
<keyword id="KW-0456">Lyase</keyword>
<keyword id="KW-0460">Magnesium</keyword>
<keyword id="KW-0479">Metal-binding</keyword>
<keyword id="KW-0620">Polyamine biosynthesis</keyword>
<keyword id="KW-0661">Putrescine biosynthesis</keyword>
<keyword id="KW-0663">Pyridoxal phosphate</keyword>
<keyword id="KW-1185">Reference proteome</keyword>
<keyword id="KW-0745">Spermidine biosynthesis</keyword>
<gene>
    <name evidence="1" type="primary">speA</name>
    <name type="ordered locus">plu3681</name>
</gene>
<proteinExistence type="inferred from homology"/>
<organism>
    <name type="scientific">Photorhabdus laumondii subsp. laumondii (strain DSM 15139 / CIP 105565 / TT01)</name>
    <name type="common">Photorhabdus luminescens subsp. laumondii</name>
    <dbReference type="NCBI Taxonomy" id="243265"/>
    <lineage>
        <taxon>Bacteria</taxon>
        <taxon>Pseudomonadati</taxon>
        <taxon>Pseudomonadota</taxon>
        <taxon>Gammaproteobacteria</taxon>
        <taxon>Enterobacterales</taxon>
        <taxon>Morganellaceae</taxon>
        <taxon>Photorhabdus</taxon>
    </lineage>
</organism>
<accession>Q7N121</accession>